<comment type="function">
    <text evidence="1">Catalyzes two activities which are involved in the cyclic version of arginine biosynthesis: the synthesis of N-acetylglutamate from glutamate and acetyl-CoA as the acetyl donor, and of ornithine by transacetylation between N(2)-acetylornithine and glutamate.</text>
</comment>
<comment type="catalytic activity">
    <reaction evidence="1">
        <text>N(2)-acetyl-L-ornithine + L-glutamate = N-acetyl-L-glutamate + L-ornithine</text>
        <dbReference type="Rhea" id="RHEA:15349"/>
        <dbReference type="ChEBI" id="CHEBI:29985"/>
        <dbReference type="ChEBI" id="CHEBI:44337"/>
        <dbReference type="ChEBI" id="CHEBI:46911"/>
        <dbReference type="ChEBI" id="CHEBI:57805"/>
        <dbReference type="EC" id="2.3.1.35"/>
    </reaction>
</comment>
<comment type="catalytic activity">
    <reaction evidence="1">
        <text>L-glutamate + acetyl-CoA = N-acetyl-L-glutamate + CoA + H(+)</text>
        <dbReference type="Rhea" id="RHEA:24292"/>
        <dbReference type="ChEBI" id="CHEBI:15378"/>
        <dbReference type="ChEBI" id="CHEBI:29985"/>
        <dbReference type="ChEBI" id="CHEBI:44337"/>
        <dbReference type="ChEBI" id="CHEBI:57287"/>
        <dbReference type="ChEBI" id="CHEBI:57288"/>
        <dbReference type="EC" id="2.3.1.1"/>
    </reaction>
</comment>
<comment type="pathway">
    <text evidence="1">Amino-acid biosynthesis; L-arginine biosynthesis; L-ornithine and N-acetyl-L-glutamate from L-glutamate and N(2)-acetyl-L-ornithine (cyclic): step 1/1.</text>
</comment>
<comment type="pathway">
    <text evidence="1">Amino-acid biosynthesis; L-arginine biosynthesis; N(2)-acetyl-L-ornithine from L-glutamate: step 1/4.</text>
</comment>
<comment type="subunit">
    <text evidence="1">Heterotetramer of two alpha and two beta chains.</text>
</comment>
<comment type="subcellular location">
    <subcellularLocation>
        <location evidence="1">Cytoplasm</location>
    </subcellularLocation>
</comment>
<comment type="similarity">
    <text evidence="1">Belongs to the ArgJ family.</text>
</comment>
<keyword id="KW-0012">Acyltransferase</keyword>
<keyword id="KW-0028">Amino-acid biosynthesis</keyword>
<keyword id="KW-0055">Arginine biosynthesis</keyword>
<keyword id="KW-0068">Autocatalytic cleavage</keyword>
<keyword id="KW-0963">Cytoplasm</keyword>
<keyword id="KW-0511">Multifunctional enzyme</keyword>
<keyword id="KW-1185">Reference proteome</keyword>
<keyword id="KW-0808">Transferase</keyword>
<gene>
    <name evidence="1" type="primary">argJ</name>
    <name type="ordered locus">Cgl1395</name>
    <name type="ordered locus">cg1581</name>
</gene>
<reference key="1">
    <citation type="journal article" date="1996" name="Microbiology">
        <title>Genes and enzymes of the acetyl cycle of arginine biosynthesis in Corynebacterium glutamicum: enzyme evolution in the early steps of the arginine pathway.</title>
        <authorList>
            <person name="Sakanyan V."/>
            <person name="Petrosyan P."/>
            <person name="Lecocq M."/>
            <person name="Boyen A."/>
            <person name="Legrain C."/>
            <person name="Demarez M.N."/>
            <person name="Hallet J.-N."/>
            <person name="Glansdorff N."/>
        </authorList>
    </citation>
    <scope>NUCLEOTIDE SEQUENCE [GENOMIC DNA]</scope>
    <source>
        <strain>ATCC 13032 / DSM 20300 / JCM 1318 / BCRC 11384 / CCUG 27702 / LMG 3730 / NBRC 12168 / NCIMB 10025 / NRRL B-2784 / 534</strain>
    </source>
</reference>
<reference key="2">
    <citation type="submission" date="1998-02" db="EMBL/GenBank/DDBJ databases">
        <title>Molecular cloning of the arginine biosynthetic genes from Corynebacterium glutamicum.</title>
        <authorList>
            <person name="Park M.Y."/>
            <person name="Chun J.Y."/>
            <person name="Ko S.-Y."/>
            <person name="Lee M.-S."/>
        </authorList>
    </citation>
    <scope>NUCLEOTIDE SEQUENCE [GENOMIC DNA]</scope>
    <source>
        <strain>ATCC 13059 / LMG 3658 / NCIB 10332 / AS019 / 613</strain>
    </source>
</reference>
<reference key="3">
    <citation type="journal article" date="2003" name="Appl. Microbiol. Biotechnol.">
        <title>The Corynebacterium glutamicum genome: features and impacts on biotechnological processes.</title>
        <authorList>
            <person name="Ikeda M."/>
            <person name="Nakagawa S."/>
        </authorList>
    </citation>
    <scope>NUCLEOTIDE SEQUENCE [LARGE SCALE GENOMIC DNA]</scope>
    <source>
        <strain>ATCC 13032 / DSM 20300 / JCM 1318 / BCRC 11384 / CCUG 27702 / LMG 3730 / NBRC 12168 / NCIMB 10025 / NRRL B-2784 / 534</strain>
    </source>
</reference>
<reference key="4">
    <citation type="journal article" date="2003" name="J. Biotechnol.">
        <title>The complete Corynebacterium glutamicum ATCC 13032 genome sequence and its impact on the production of L-aspartate-derived amino acids and vitamins.</title>
        <authorList>
            <person name="Kalinowski J."/>
            <person name="Bathe B."/>
            <person name="Bartels D."/>
            <person name="Bischoff N."/>
            <person name="Bott M."/>
            <person name="Burkovski A."/>
            <person name="Dusch N."/>
            <person name="Eggeling L."/>
            <person name="Eikmanns B.J."/>
            <person name="Gaigalat L."/>
            <person name="Goesmann A."/>
            <person name="Hartmann M."/>
            <person name="Huthmacher K."/>
            <person name="Kraemer R."/>
            <person name="Linke B."/>
            <person name="McHardy A.C."/>
            <person name="Meyer F."/>
            <person name="Moeckel B."/>
            <person name="Pfefferle W."/>
            <person name="Puehler A."/>
            <person name="Rey D.A."/>
            <person name="Rueckert C."/>
            <person name="Rupp O."/>
            <person name="Sahm H."/>
            <person name="Wendisch V.F."/>
            <person name="Wiegraebe I."/>
            <person name="Tauch A."/>
        </authorList>
    </citation>
    <scope>NUCLEOTIDE SEQUENCE [LARGE SCALE GENOMIC DNA]</scope>
    <source>
        <strain>ATCC 13032 / DSM 20300 / JCM 1318 / BCRC 11384 / CCUG 27702 / LMG 3730 / NBRC 12168 / NCIMB 10025 / NRRL B-2784 / 534</strain>
    </source>
</reference>
<evidence type="ECO:0000255" key="1">
    <source>
        <dbReference type="HAMAP-Rule" id="MF_01106"/>
    </source>
</evidence>
<evidence type="ECO:0000305" key="2"/>
<organism>
    <name type="scientific">Corynebacterium glutamicum (strain ATCC 13032 / DSM 20300 / JCM 1318 / BCRC 11384 / CCUG 27702 / LMG 3730 / NBRC 12168 / NCIMB 10025 / NRRL B-2784 / 534)</name>
    <dbReference type="NCBI Taxonomy" id="196627"/>
    <lineage>
        <taxon>Bacteria</taxon>
        <taxon>Bacillati</taxon>
        <taxon>Actinomycetota</taxon>
        <taxon>Actinomycetes</taxon>
        <taxon>Mycobacteriales</taxon>
        <taxon>Corynebacteriaceae</taxon>
        <taxon>Corynebacterium</taxon>
    </lineage>
</organism>
<sequence>MAEKGITAPKGFVASATTAGIKASGNPDMALVVNQGPEFSAAAVFTRNRVFAAPVKVSRENVADGQIRAVLYNAGNANACNGLQGEKDARESVSHLAQNLGLEDSDIGVCSTGLIGELLPMDKLNAGIDQLTAEGALGDNGAAAAKAIMTTDTVDKETVVFADGWTVGGMGKGVGMMAPSLATMLVCLTTDASVTQEMAQIALANATAVTFDTLDIDGSTSTNDTVFLLASGASGITPTQDELNDAVYAACSDIAAKLQADAEGVTKRVAVTVVGTTNNEQAINAARTVARDNLFKCAMFGSDPNWGRVLAAVGMADADMEPEKISVFFNGQAVCLDSTGAPGAREVDLSGADIDVRIDLGTSGEGQATVRTTDLSFSYVEINSAYSS</sequence>
<protein>
    <recommendedName>
        <fullName evidence="1">Arginine biosynthesis bifunctional protein ArgJ</fullName>
    </recommendedName>
    <domain>
        <recommendedName>
            <fullName evidence="1">Glutamate N-acetyltransferase</fullName>
            <ecNumber evidence="1">2.3.1.35</ecNumber>
        </recommendedName>
        <alternativeName>
            <fullName evidence="1">Ornithine acetyltransferase</fullName>
            <shortName evidence="1">OATase</shortName>
        </alternativeName>
        <alternativeName>
            <fullName evidence="1">Ornithine transacetylase</fullName>
        </alternativeName>
    </domain>
    <domain>
        <recommendedName>
            <fullName evidence="1">Amino-acid acetyltransferase</fullName>
            <ecNumber evidence="1">2.3.1.1</ecNumber>
        </recommendedName>
        <alternativeName>
            <fullName evidence="1">N-acetylglutamate synthase</fullName>
            <shortName evidence="1">AGSase</shortName>
        </alternativeName>
    </domain>
    <component>
        <recommendedName>
            <fullName evidence="1">Arginine biosynthesis bifunctional protein ArgJ alpha chain</fullName>
        </recommendedName>
    </component>
    <component>
        <recommendedName>
            <fullName evidence="1">Arginine biosynthesis bifunctional protein ArgJ beta chain</fullName>
        </recommendedName>
    </component>
</protein>
<proteinExistence type="inferred from homology"/>
<name>ARGJ_CORGL</name>
<dbReference type="EC" id="2.3.1.35" evidence="1"/>
<dbReference type="EC" id="2.3.1.1" evidence="1"/>
<dbReference type="EMBL" id="X86157">
    <property type="protein sequence ID" value="CAA60097.1"/>
    <property type="molecule type" value="Genomic_DNA"/>
</dbReference>
<dbReference type="EMBL" id="AF049897">
    <property type="protein sequence ID" value="AAC24813.1"/>
    <property type="molecule type" value="Genomic_DNA"/>
</dbReference>
<dbReference type="EMBL" id="BA000036">
    <property type="protein sequence ID" value="BAB98788.1"/>
    <property type="molecule type" value="Genomic_DNA"/>
</dbReference>
<dbReference type="EMBL" id="BX927152">
    <property type="protein sequence ID" value="CAF21406.1"/>
    <property type="molecule type" value="Genomic_DNA"/>
</dbReference>
<dbReference type="RefSeq" id="NP_600614.1">
    <property type="nucleotide sequence ID" value="NC_003450.3"/>
</dbReference>
<dbReference type="RefSeq" id="WP_011014333.1">
    <property type="nucleotide sequence ID" value="NC_006958.1"/>
</dbReference>
<dbReference type="SMR" id="Q59280"/>
<dbReference type="STRING" id="196627.cg1581"/>
<dbReference type="GeneID" id="1019371"/>
<dbReference type="KEGG" id="cgb:cg1581"/>
<dbReference type="KEGG" id="cgl:Cgl1395"/>
<dbReference type="PATRIC" id="fig|196627.13.peg.1364"/>
<dbReference type="eggNOG" id="COG1364">
    <property type="taxonomic scope" value="Bacteria"/>
</dbReference>
<dbReference type="HOGENOM" id="CLU_027172_2_0_11"/>
<dbReference type="OrthoDB" id="9804242at2"/>
<dbReference type="BioCyc" id="CORYNE:G18NG-10974-MONOMER"/>
<dbReference type="BRENDA" id="2.3.1.35">
    <property type="organism ID" value="960"/>
</dbReference>
<dbReference type="UniPathway" id="UPA00068">
    <property type="reaction ID" value="UER00106"/>
</dbReference>
<dbReference type="UniPathway" id="UPA00068">
    <property type="reaction ID" value="UER00111"/>
</dbReference>
<dbReference type="Proteomes" id="UP000000582">
    <property type="component" value="Chromosome"/>
</dbReference>
<dbReference type="Proteomes" id="UP000001009">
    <property type="component" value="Chromosome"/>
</dbReference>
<dbReference type="GO" id="GO:0005737">
    <property type="term" value="C:cytoplasm"/>
    <property type="evidence" value="ECO:0007669"/>
    <property type="project" value="UniProtKB-SubCell"/>
</dbReference>
<dbReference type="GO" id="GO:0004358">
    <property type="term" value="F:glutamate N-acetyltransferase activity"/>
    <property type="evidence" value="ECO:0007669"/>
    <property type="project" value="UniProtKB-UniRule"/>
</dbReference>
<dbReference type="GO" id="GO:0004042">
    <property type="term" value="F:L-glutamate N-acetyltransferase activity"/>
    <property type="evidence" value="ECO:0007669"/>
    <property type="project" value="UniProtKB-UniRule"/>
</dbReference>
<dbReference type="GO" id="GO:0006526">
    <property type="term" value="P:L-arginine biosynthetic process"/>
    <property type="evidence" value="ECO:0007669"/>
    <property type="project" value="UniProtKB-UniRule"/>
</dbReference>
<dbReference type="GO" id="GO:0006592">
    <property type="term" value="P:ornithine biosynthetic process"/>
    <property type="evidence" value="ECO:0007669"/>
    <property type="project" value="TreeGrafter"/>
</dbReference>
<dbReference type="CDD" id="cd02152">
    <property type="entry name" value="OAT"/>
    <property type="match status" value="1"/>
</dbReference>
<dbReference type="Gene3D" id="3.10.20.340">
    <property type="entry name" value="ArgJ beta chain, C-terminal domain"/>
    <property type="match status" value="1"/>
</dbReference>
<dbReference type="Gene3D" id="3.60.70.12">
    <property type="entry name" value="L-amino peptidase D-ALA esterase/amidase"/>
    <property type="match status" value="1"/>
</dbReference>
<dbReference type="HAMAP" id="MF_01106">
    <property type="entry name" value="ArgJ"/>
    <property type="match status" value="1"/>
</dbReference>
<dbReference type="InterPro" id="IPR002813">
    <property type="entry name" value="Arg_biosynth_ArgJ"/>
</dbReference>
<dbReference type="InterPro" id="IPR016117">
    <property type="entry name" value="ArgJ-like_dom_sf"/>
</dbReference>
<dbReference type="InterPro" id="IPR042195">
    <property type="entry name" value="ArgJ_beta_C"/>
</dbReference>
<dbReference type="NCBIfam" id="TIGR00120">
    <property type="entry name" value="ArgJ"/>
    <property type="match status" value="1"/>
</dbReference>
<dbReference type="NCBIfam" id="NF003802">
    <property type="entry name" value="PRK05388.1"/>
    <property type="match status" value="1"/>
</dbReference>
<dbReference type="PANTHER" id="PTHR23100">
    <property type="entry name" value="ARGININE BIOSYNTHESIS BIFUNCTIONAL PROTEIN ARGJ"/>
    <property type="match status" value="1"/>
</dbReference>
<dbReference type="PANTHER" id="PTHR23100:SF0">
    <property type="entry name" value="ARGININE BIOSYNTHESIS BIFUNCTIONAL PROTEIN ARGJ, MITOCHONDRIAL"/>
    <property type="match status" value="1"/>
</dbReference>
<dbReference type="Pfam" id="PF01960">
    <property type="entry name" value="ArgJ"/>
    <property type="match status" value="1"/>
</dbReference>
<dbReference type="SUPFAM" id="SSF56266">
    <property type="entry name" value="DmpA/ArgJ-like"/>
    <property type="match status" value="1"/>
</dbReference>
<feature type="chain" id="PRO_0000002161" description="Arginine biosynthesis bifunctional protein ArgJ alpha chain" evidence="1">
    <location>
        <begin position="1"/>
        <end position="182"/>
    </location>
</feature>
<feature type="chain" id="PRO_0000002162" description="Arginine biosynthesis bifunctional protein ArgJ beta chain" evidence="1">
    <location>
        <begin position="183"/>
        <end position="388"/>
    </location>
</feature>
<feature type="active site" description="Nucleophile" evidence="1">
    <location>
        <position position="183"/>
    </location>
</feature>
<feature type="binding site" evidence="1">
    <location>
        <position position="150"/>
    </location>
    <ligand>
        <name>substrate</name>
    </ligand>
</feature>
<feature type="binding site" evidence="1">
    <location>
        <position position="172"/>
    </location>
    <ligand>
        <name>substrate</name>
    </ligand>
</feature>
<feature type="binding site" evidence="1">
    <location>
        <position position="183"/>
    </location>
    <ligand>
        <name>substrate</name>
    </ligand>
</feature>
<feature type="binding site" evidence="1">
    <location>
        <position position="263"/>
    </location>
    <ligand>
        <name>substrate</name>
    </ligand>
</feature>
<feature type="binding site" evidence="1">
    <location>
        <position position="383"/>
    </location>
    <ligand>
        <name>substrate</name>
    </ligand>
</feature>
<feature type="binding site" evidence="1">
    <location>
        <position position="388"/>
    </location>
    <ligand>
        <name>substrate</name>
    </ligand>
</feature>
<feature type="site" description="Involved in the stabilization of negative charge on the oxyanion by the formation of the oxyanion hole" evidence="1">
    <location>
        <position position="112"/>
    </location>
</feature>
<feature type="site" description="Involved in the stabilization of negative charge on the oxyanion by the formation of the oxyanion hole" evidence="1">
    <location>
        <position position="113"/>
    </location>
</feature>
<feature type="site" description="Cleavage; by autolysis" evidence="1">
    <location>
        <begin position="182"/>
        <end position="183"/>
    </location>
</feature>
<feature type="sequence conflict" description="In Ref. 1; CAA60097 and 2; AAC24813." evidence="2" ref="1 2">
    <original>GA</original>
    <variation>AP</variation>
    <location>
        <begin position="135"/>
        <end position="136"/>
    </location>
</feature>
<accession>Q59280</accession>